<feature type="chain" id="PRO_0000147043" description="Probable phosphoenolpyruvate synthase">
    <location>
        <begin position="1"/>
        <end position="819"/>
    </location>
</feature>
<feature type="active site" description="Tele-phosphohistidine intermediate" evidence="1">
    <location>
        <position position="441"/>
    </location>
</feature>
<feature type="active site" description="Proton donor" evidence="1">
    <location>
        <position position="756"/>
    </location>
</feature>
<feature type="binding site" evidence="1">
    <location>
        <position position="540"/>
    </location>
    <ligand>
        <name>substrate</name>
    </ligand>
</feature>
<feature type="binding site" evidence="1">
    <location>
        <position position="587"/>
    </location>
    <ligand>
        <name>substrate</name>
    </ligand>
</feature>
<feature type="binding site" evidence="1">
    <location>
        <position position="684"/>
    </location>
    <ligand>
        <name>Mg(2+)</name>
        <dbReference type="ChEBI" id="CHEBI:18420"/>
    </ligand>
</feature>
<feature type="binding site" evidence="1">
    <location>
        <position position="684"/>
    </location>
    <ligand>
        <name>substrate</name>
    </ligand>
</feature>
<feature type="binding site" evidence="1">
    <location>
        <position position="706"/>
    </location>
    <ligand>
        <name>substrate</name>
    </ligand>
</feature>
<feature type="binding site" evidence="1">
    <location>
        <position position="707"/>
    </location>
    <ligand>
        <name>substrate</name>
    </ligand>
</feature>
<feature type="binding site" evidence="1">
    <location>
        <position position="708"/>
    </location>
    <ligand>
        <name>substrate</name>
    </ligand>
</feature>
<feature type="binding site" evidence="1">
    <location>
        <position position="709"/>
    </location>
    <ligand>
        <name>Mg(2+)</name>
        <dbReference type="ChEBI" id="CHEBI:18420"/>
    </ligand>
</feature>
<feature type="binding site" evidence="1">
    <location>
        <position position="709"/>
    </location>
    <ligand>
        <name>substrate</name>
    </ligand>
</feature>
<dbReference type="EC" id="2.7.9.2"/>
<dbReference type="EMBL" id="AJ248283">
    <property type="protein sequence ID" value="CAB49021.1"/>
    <property type="molecule type" value="Genomic_DNA"/>
</dbReference>
<dbReference type="EMBL" id="HE613800">
    <property type="protein sequence ID" value="CCE69473.1"/>
    <property type="molecule type" value="Genomic_DNA"/>
</dbReference>
<dbReference type="PIR" id="F75196">
    <property type="entry name" value="F75196"/>
</dbReference>
<dbReference type="RefSeq" id="WP_010867221.1">
    <property type="nucleotide sequence ID" value="NC_000868.1"/>
</dbReference>
<dbReference type="SMR" id="Q9V2H7"/>
<dbReference type="STRING" id="272844.PAB0057"/>
<dbReference type="KEGG" id="pab:PAB0057"/>
<dbReference type="PATRIC" id="fig|272844.11.peg.110"/>
<dbReference type="eggNOG" id="arCOG01111">
    <property type="taxonomic scope" value="Archaea"/>
</dbReference>
<dbReference type="HOGENOM" id="CLU_007308_6_2_2"/>
<dbReference type="OrthoDB" id="23397at2157"/>
<dbReference type="PhylomeDB" id="Q9V2H7"/>
<dbReference type="UniPathway" id="UPA00138"/>
<dbReference type="Proteomes" id="UP000000810">
    <property type="component" value="Chromosome"/>
</dbReference>
<dbReference type="Proteomes" id="UP000009139">
    <property type="component" value="Chromosome"/>
</dbReference>
<dbReference type="GO" id="GO:0005524">
    <property type="term" value="F:ATP binding"/>
    <property type="evidence" value="ECO:0007669"/>
    <property type="project" value="UniProtKB-KW"/>
</dbReference>
<dbReference type="GO" id="GO:0046872">
    <property type="term" value="F:metal ion binding"/>
    <property type="evidence" value="ECO:0007669"/>
    <property type="project" value="UniProtKB-KW"/>
</dbReference>
<dbReference type="GO" id="GO:0008986">
    <property type="term" value="F:pyruvate, water dikinase activity"/>
    <property type="evidence" value="ECO:0007669"/>
    <property type="project" value="UniProtKB-EC"/>
</dbReference>
<dbReference type="GO" id="GO:0006094">
    <property type="term" value="P:gluconeogenesis"/>
    <property type="evidence" value="ECO:0007669"/>
    <property type="project" value="UniProtKB-UniPathway"/>
</dbReference>
<dbReference type="Gene3D" id="3.30.1490.20">
    <property type="entry name" value="ATP-grasp fold, A domain"/>
    <property type="match status" value="1"/>
</dbReference>
<dbReference type="Gene3D" id="3.30.470.20">
    <property type="entry name" value="ATP-grasp fold, B domain"/>
    <property type="match status" value="1"/>
</dbReference>
<dbReference type="Gene3D" id="3.20.20.60">
    <property type="entry name" value="Phosphoenolpyruvate-binding domains"/>
    <property type="match status" value="1"/>
</dbReference>
<dbReference type="Gene3D" id="3.50.30.10">
    <property type="entry name" value="Phosphohistidine domain"/>
    <property type="match status" value="1"/>
</dbReference>
<dbReference type="InterPro" id="IPR013815">
    <property type="entry name" value="ATP_grasp_subdomain_1"/>
</dbReference>
<dbReference type="InterPro" id="IPR008279">
    <property type="entry name" value="PEP-util_enz_mobile_dom"/>
</dbReference>
<dbReference type="InterPro" id="IPR006319">
    <property type="entry name" value="PEP_synth"/>
</dbReference>
<dbReference type="InterPro" id="IPR018274">
    <property type="entry name" value="PEP_util_AS"/>
</dbReference>
<dbReference type="InterPro" id="IPR000121">
    <property type="entry name" value="PEP_util_C"/>
</dbReference>
<dbReference type="InterPro" id="IPR023151">
    <property type="entry name" value="PEP_util_CS"/>
</dbReference>
<dbReference type="InterPro" id="IPR036637">
    <property type="entry name" value="Phosphohistidine_dom_sf"/>
</dbReference>
<dbReference type="InterPro" id="IPR002192">
    <property type="entry name" value="PPDK_AMP/ATP-bd"/>
</dbReference>
<dbReference type="InterPro" id="IPR015813">
    <property type="entry name" value="Pyrv/PenolPyrv_kinase-like_dom"/>
</dbReference>
<dbReference type="InterPro" id="IPR040442">
    <property type="entry name" value="Pyrv_kinase-like_dom_sf"/>
</dbReference>
<dbReference type="NCBIfam" id="TIGR01418">
    <property type="entry name" value="PEP_synth"/>
    <property type="match status" value="1"/>
</dbReference>
<dbReference type="NCBIfam" id="NF005057">
    <property type="entry name" value="PRK06464.1"/>
    <property type="match status" value="1"/>
</dbReference>
<dbReference type="PANTHER" id="PTHR43030">
    <property type="entry name" value="PHOSPHOENOLPYRUVATE SYNTHASE"/>
    <property type="match status" value="1"/>
</dbReference>
<dbReference type="PANTHER" id="PTHR43030:SF1">
    <property type="entry name" value="PHOSPHOENOLPYRUVATE SYNTHASE"/>
    <property type="match status" value="1"/>
</dbReference>
<dbReference type="Pfam" id="PF00391">
    <property type="entry name" value="PEP-utilizers"/>
    <property type="match status" value="1"/>
</dbReference>
<dbReference type="Pfam" id="PF02896">
    <property type="entry name" value="PEP-utilizers_C"/>
    <property type="match status" value="1"/>
</dbReference>
<dbReference type="Pfam" id="PF01326">
    <property type="entry name" value="PPDK_N"/>
    <property type="match status" value="1"/>
</dbReference>
<dbReference type="PIRSF" id="PIRSF000854">
    <property type="entry name" value="PEP_synthase"/>
    <property type="match status" value="1"/>
</dbReference>
<dbReference type="PRINTS" id="PR01736">
    <property type="entry name" value="PHPHTRNFRASE"/>
</dbReference>
<dbReference type="SUPFAM" id="SSF56059">
    <property type="entry name" value="Glutathione synthetase ATP-binding domain-like"/>
    <property type="match status" value="1"/>
</dbReference>
<dbReference type="SUPFAM" id="SSF51621">
    <property type="entry name" value="Phosphoenolpyruvate/pyruvate domain"/>
    <property type="match status" value="1"/>
</dbReference>
<dbReference type="SUPFAM" id="SSF52009">
    <property type="entry name" value="Phosphohistidine domain"/>
    <property type="match status" value="1"/>
</dbReference>
<dbReference type="PROSITE" id="PS00742">
    <property type="entry name" value="PEP_ENZYMES_2"/>
    <property type="match status" value="1"/>
</dbReference>
<dbReference type="PROSITE" id="PS00370">
    <property type="entry name" value="PEP_ENZYMES_PHOS_SITE"/>
    <property type="match status" value="1"/>
</dbReference>
<proteinExistence type="inferred from homology"/>
<protein>
    <recommendedName>
        <fullName>Probable phosphoenolpyruvate synthase</fullName>
        <shortName>PEP synthase</shortName>
        <ecNumber>2.7.9.2</ecNumber>
    </recommendedName>
    <alternativeName>
        <fullName>Pyruvate, water dikinase</fullName>
    </alternativeName>
</protein>
<accession>Q9V2H7</accession>
<accession>G8ZFT2</accession>
<comment type="function">
    <text evidence="1">Catalyzes the phosphorylation of pyruvate to phosphoenolpyruvate.</text>
</comment>
<comment type="catalytic activity">
    <reaction>
        <text>pyruvate + ATP + H2O = phosphoenolpyruvate + AMP + phosphate + 2 H(+)</text>
        <dbReference type="Rhea" id="RHEA:11364"/>
        <dbReference type="ChEBI" id="CHEBI:15361"/>
        <dbReference type="ChEBI" id="CHEBI:15377"/>
        <dbReference type="ChEBI" id="CHEBI:15378"/>
        <dbReference type="ChEBI" id="CHEBI:30616"/>
        <dbReference type="ChEBI" id="CHEBI:43474"/>
        <dbReference type="ChEBI" id="CHEBI:58702"/>
        <dbReference type="ChEBI" id="CHEBI:456215"/>
        <dbReference type="EC" id="2.7.9.2"/>
    </reaction>
</comment>
<comment type="cofactor">
    <cofactor evidence="1">
        <name>Mg(2+)</name>
        <dbReference type="ChEBI" id="CHEBI:18420"/>
    </cofactor>
</comment>
<comment type="pathway">
    <text>Carbohydrate biosynthesis; gluconeogenesis.</text>
</comment>
<comment type="domain">
    <text evidence="1">The N-terminal domain contains the ATP/Pi binding site, the central domain the pyrophosphate/phosphate carrier histidine, and the C-terminal domain the pyruvate binding site.</text>
</comment>
<comment type="miscellaneous">
    <text evidence="1">The reaction takes place in three steps, mediated by a phosphocarrier histidine residue located on the surface of the central domain. The two first partial reactions are catalyzed at an active site located on the N-terminal domain, and the third partial reaction is catalyzed at an active site located on the C-terminal domain. For catalytic turnover, the central domain swivels from the concave surface of the N-terminal domain to that of the C-terminal domain (By similarity).</text>
</comment>
<comment type="similarity">
    <text evidence="2">Belongs to the PEP-utilizing enzyme family.</text>
</comment>
<name>PPSA_PYRAB</name>
<keyword id="KW-0067">ATP-binding</keyword>
<keyword id="KW-0418">Kinase</keyword>
<keyword id="KW-0460">Magnesium</keyword>
<keyword id="KW-0479">Metal-binding</keyword>
<keyword id="KW-0547">Nucleotide-binding</keyword>
<keyword id="KW-0808">Transferase</keyword>
<reference key="1">
    <citation type="journal article" date="2003" name="Mol. Microbiol.">
        <title>An integrated analysis of the genome of the hyperthermophilic archaeon Pyrococcus abyssi.</title>
        <authorList>
            <person name="Cohen G.N."/>
            <person name="Barbe V."/>
            <person name="Flament D."/>
            <person name="Galperin M."/>
            <person name="Heilig R."/>
            <person name="Lecompte O."/>
            <person name="Poch O."/>
            <person name="Prieur D."/>
            <person name="Querellou J."/>
            <person name="Ripp R."/>
            <person name="Thierry J.-C."/>
            <person name="Van der Oost J."/>
            <person name="Weissenbach J."/>
            <person name="Zivanovic Y."/>
            <person name="Forterre P."/>
        </authorList>
    </citation>
    <scope>NUCLEOTIDE SEQUENCE [LARGE SCALE GENOMIC DNA]</scope>
    <source>
        <strain>GE5 / Orsay</strain>
    </source>
</reference>
<reference key="2">
    <citation type="journal article" date="2012" name="Curr. Microbiol.">
        <title>Re-annotation of two hyperthermophilic archaea Pyrococcus abyssi GE5 and Pyrococcus furiosus DSM 3638.</title>
        <authorList>
            <person name="Gao J."/>
            <person name="Wang J."/>
        </authorList>
    </citation>
    <scope>GENOME REANNOTATION</scope>
    <source>
        <strain>GE5 / Orsay</strain>
    </source>
</reference>
<sequence length="819" mass="90653">MAYRFIKWFEELRKEDVPLVGGKGANLGEMTNAGIPVPPGFCVTAEAYKYFVENVKISKEDVKRILGEKANKGTIAEVLAQAPDEPRPLQEWIMDIINRTNVDDSKQLQENTAVIRELIKSLDMPAEIADEIKQAYKELSQRFGKDEIYVAVRSSATAEDLPEASFAGQQETYLDVLGADDVIDKVKRCWASLWTARATFYRAKQGFDHSKVYLSAVVQKMVNSEKSGVMFTANPVTNNRNEIMINASWGLGEAVVSGAVTPDEYIVEKGTWKIKEKVIAKKEVMVIRNPETGKGTVTVKVAEYLGPEWVEKQVLTDEQIIEVAKMGQKIEEHYGWPQDIEWAYDKDDGKLYIVQSRPVTTLKETTTEEVEEVEEAEVILKGLGASPGIGAGRVVVIFDASEIDKVKEGDVLVTTMTNPDMVPAMKRAAAIITDEGGRTSHAAIVSRELGIPAVVGTKEATKKLKTGDYVTVDGTRGLVYKGIVKSLVEKKKKEEAAAAPGAAVAAAPLVTGTLVKVNVSMPEVAERAAATGADGVGLLRAEHMILSIGQHPVKFIKEGKEEELVEKLAEGIEKVAAAFYPRPVWYRTLDAPTNEFREMPGGEDEPEERNPMLGWRGIRRGLDQPELLRAEFKAIKKVVEKGYNNIGVMLPLVSHPEQIRKAKEIARSVGLEPHKDVAWGIMIEVPAAAIIIEDLIKEGIDFVSFGTNDLTQYTLAIDRDNERVAKLYDETHPAVLKLIKHVIKVCKRYGVETSICGQAGSDPKMARILVRLGIDSISANPDAVQLIRQVVAQEERKLMLEAARKRLFEEEEEEEEFLF</sequence>
<organism>
    <name type="scientific">Pyrococcus abyssi (strain GE5 / Orsay)</name>
    <dbReference type="NCBI Taxonomy" id="272844"/>
    <lineage>
        <taxon>Archaea</taxon>
        <taxon>Methanobacteriati</taxon>
        <taxon>Methanobacteriota</taxon>
        <taxon>Thermococci</taxon>
        <taxon>Thermococcales</taxon>
        <taxon>Thermococcaceae</taxon>
        <taxon>Pyrococcus</taxon>
    </lineage>
</organism>
<gene>
    <name type="primary">ppsA</name>
    <name type="ordered locus">PYRAB00970</name>
    <name type="ORF">PAB0057</name>
</gene>
<evidence type="ECO:0000250" key="1"/>
<evidence type="ECO:0000305" key="2"/>